<dbReference type="EMBL" id="BX571857">
    <property type="protein sequence ID" value="CAG43900.1"/>
    <property type="molecule type" value="Genomic_DNA"/>
</dbReference>
<dbReference type="RefSeq" id="WP_001078309.1">
    <property type="nucleotide sequence ID" value="NC_002953.3"/>
</dbReference>
<dbReference type="SMR" id="Q6G7C3"/>
<dbReference type="KEGG" id="sas:SAS2092"/>
<dbReference type="HOGENOM" id="CLU_152490_1_0_9"/>
<dbReference type="GO" id="GO:0005737">
    <property type="term" value="C:cytoplasm"/>
    <property type="evidence" value="ECO:0007669"/>
    <property type="project" value="UniProtKB-SubCell"/>
</dbReference>
<dbReference type="GO" id="GO:0046872">
    <property type="term" value="F:metal ion binding"/>
    <property type="evidence" value="ECO:0007669"/>
    <property type="project" value="UniProtKB-KW"/>
</dbReference>
<dbReference type="GO" id="GO:0016740">
    <property type="term" value="F:transferase activity"/>
    <property type="evidence" value="ECO:0007669"/>
    <property type="project" value="UniProtKB-KW"/>
</dbReference>
<dbReference type="GO" id="GO:0009401">
    <property type="term" value="P:phosphoenolpyruvate-dependent sugar phosphotransferase system"/>
    <property type="evidence" value="ECO:0007669"/>
    <property type="project" value="UniProtKB-KW"/>
</dbReference>
<dbReference type="CDD" id="cd00215">
    <property type="entry name" value="PTS_IIA_lac"/>
    <property type="match status" value="1"/>
</dbReference>
<dbReference type="Gene3D" id="1.20.58.80">
    <property type="entry name" value="Phosphotransferase system, lactose/cellobiose-type IIA subunit"/>
    <property type="match status" value="1"/>
</dbReference>
<dbReference type="InterPro" id="IPR003188">
    <property type="entry name" value="PTS_IIA_lac/cel"/>
</dbReference>
<dbReference type="InterPro" id="IPR036542">
    <property type="entry name" value="PTS_IIA_lac/cel_sf"/>
</dbReference>
<dbReference type="NCBIfam" id="TIGR00823">
    <property type="entry name" value="EIIA-LAC"/>
    <property type="match status" value="1"/>
</dbReference>
<dbReference type="PANTHER" id="PTHR34382:SF9">
    <property type="entry name" value="PHOSPHOTRANSFERASE SYSTEM SUGAR-SPECIFIC EII COMPONENT"/>
    <property type="match status" value="1"/>
</dbReference>
<dbReference type="PANTHER" id="PTHR34382">
    <property type="entry name" value="PTS SYSTEM N,N'-DIACETYLCHITOBIOSE-SPECIFIC EIIA COMPONENT"/>
    <property type="match status" value="1"/>
</dbReference>
<dbReference type="Pfam" id="PF02255">
    <property type="entry name" value="PTS_IIA"/>
    <property type="match status" value="1"/>
</dbReference>
<dbReference type="PIRSF" id="PIRSF000699">
    <property type="entry name" value="PTS_IILac_III"/>
    <property type="match status" value="1"/>
</dbReference>
<dbReference type="SUPFAM" id="SSF46973">
    <property type="entry name" value="Enzyme IIa from lactose specific PTS, IIa-lac"/>
    <property type="match status" value="1"/>
</dbReference>
<dbReference type="PROSITE" id="PS51095">
    <property type="entry name" value="PTS_EIIA_TYPE_3"/>
    <property type="match status" value="1"/>
</dbReference>
<accession>Q6G7C3</accession>
<gene>
    <name evidence="1" type="primary">lacF</name>
    <name type="ordered locus">SAS2092</name>
</gene>
<comment type="function">
    <text evidence="1">The phosphoenolpyruvate-dependent sugar phosphotransferase system (sugar PTS), a major carbohydrate active transport system, catalyzes the phosphorylation of incoming sugar substrates concomitantly with their translocation across the cell membrane. The enzyme II LacEF PTS system is involved in lactose transport.</text>
</comment>
<comment type="cofactor">
    <cofactor evidence="2">
        <name>Mg(2+)</name>
        <dbReference type="ChEBI" id="CHEBI:18420"/>
    </cofactor>
    <text evidence="2">Binds 1 Mg(2+) ion per trimer.</text>
</comment>
<comment type="subunit">
    <text evidence="1">Homotrimer.</text>
</comment>
<comment type="subcellular location">
    <subcellularLocation>
        <location evidence="4">Cytoplasm</location>
    </subcellularLocation>
</comment>
<comment type="induction">
    <text evidence="1">Induced by lactose, galactose and galactose-6-P. Repressed by glucose.</text>
</comment>
<comment type="domain">
    <text evidence="3">The PTS EIIA type-3 domain is phosphorylated by phospho-HPr on a histidyl residue. Then, it transfers the phosphoryl group to the PTS EIIB type-3 domain.</text>
</comment>
<reference key="1">
    <citation type="journal article" date="2004" name="Proc. Natl. Acad. Sci. U.S.A.">
        <title>Complete genomes of two clinical Staphylococcus aureus strains: evidence for the rapid evolution of virulence and drug resistance.</title>
        <authorList>
            <person name="Holden M.T.G."/>
            <person name="Feil E.J."/>
            <person name="Lindsay J.A."/>
            <person name="Peacock S.J."/>
            <person name="Day N.P.J."/>
            <person name="Enright M.C."/>
            <person name="Foster T.J."/>
            <person name="Moore C.E."/>
            <person name="Hurst L."/>
            <person name="Atkin R."/>
            <person name="Barron A."/>
            <person name="Bason N."/>
            <person name="Bentley S.D."/>
            <person name="Chillingworth C."/>
            <person name="Chillingworth T."/>
            <person name="Churcher C."/>
            <person name="Clark L."/>
            <person name="Corton C."/>
            <person name="Cronin A."/>
            <person name="Doggett J."/>
            <person name="Dowd L."/>
            <person name="Feltwell T."/>
            <person name="Hance Z."/>
            <person name="Harris B."/>
            <person name="Hauser H."/>
            <person name="Holroyd S."/>
            <person name="Jagels K."/>
            <person name="James K.D."/>
            <person name="Lennard N."/>
            <person name="Line A."/>
            <person name="Mayes R."/>
            <person name="Moule S."/>
            <person name="Mungall K."/>
            <person name="Ormond D."/>
            <person name="Quail M.A."/>
            <person name="Rabbinowitsch E."/>
            <person name="Rutherford K.M."/>
            <person name="Sanders M."/>
            <person name="Sharp S."/>
            <person name="Simmonds M."/>
            <person name="Stevens K."/>
            <person name="Whitehead S."/>
            <person name="Barrell B.G."/>
            <person name="Spratt B.G."/>
            <person name="Parkhill J."/>
        </authorList>
    </citation>
    <scope>NUCLEOTIDE SEQUENCE [LARGE SCALE GENOMIC DNA]</scope>
    <source>
        <strain>MSSA476</strain>
    </source>
</reference>
<name>PTLA_STAAS</name>
<evidence type="ECO:0000250" key="1">
    <source>
        <dbReference type="UniProtKB" id="P0A0D6"/>
    </source>
</evidence>
<evidence type="ECO:0000250" key="2">
    <source>
        <dbReference type="UniProtKB" id="P23532"/>
    </source>
</evidence>
<evidence type="ECO:0000255" key="3">
    <source>
        <dbReference type="PROSITE-ProRule" id="PRU00418"/>
    </source>
</evidence>
<evidence type="ECO:0000305" key="4"/>
<proteinExistence type="inferred from homology"/>
<sequence>MNREEVQLLGFEIVAFAGDARSKFLEALTAAQAGDFAKADALIEEGNNCIAEAHRAQTSLLAKEAQGDDIAYSVTMMHGQDHLMTTILLKDLMKHLLEFYKRG</sequence>
<protein>
    <recommendedName>
        <fullName evidence="1">PTS system lactose-specific EIIA component</fullName>
    </recommendedName>
    <alternativeName>
        <fullName evidence="1">EIIA-Lac</fullName>
    </alternativeName>
    <alternativeName>
        <fullName evidence="1">EIII-Lac</fullName>
    </alternativeName>
    <alternativeName>
        <fullName evidence="1">Lactose-specific phosphotransferase enzyme IIA component</fullName>
    </alternativeName>
</protein>
<keyword id="KW-0963">Cytoplasm</keyword>
<keyword id="KW-0460">Magnesium</keyword>
<keyword id="KW-0479">Metal-binding</keyword>
<keyword id="KW-0597">Phosphoprotein</keyword>
<keyword id="KW-0598">Phosphotransferase system</keyword>
<keyword id="KW-0762">Sugar transport</keyword>
<keyword id="KW-0808">Transferase</keyword>
<keyword id="KW-0813">Transport</keyword>
<organism>
    <name type="scientific">Staphylococcus aureus (strain MSSA476)</name>
    <dbReference type="NCBI Taxonomy" id="282459"/>
    <lineage>
        <taxon>Bacteria</taxon>
        <taxon>Bacillati</taxon>
        <taxon>Bacillota</taxon>
        <taxon>Bacilli</taxon>
        <taxon>Bacillales</taxon>
        <taxon>Staphylococcaceae</taxon>
        <taxon>Staphylococcus</taxon>
    </lineage>
</organism>
<feature type="chain" id="PRO_0000186602" description="PTS system lactose-specific EIIA component">
    <location>
        <begin position="1"/>
        <end position="103"/>
    </location>
</feature>
<feature type="domain" description="PTS EIIA type-3" evidence="3">
    <location>
        <begin position="1"/>
        <end position="102"/>
    </location>
</feature>
<feature type="active site" description="Tele-phosphohistidine intermediate" evidence="1">
    <location>
        <position position="78"/>
    </location>
</feature>
<feature type="binding site" evidence="2">
    <location>
        <position position="81"/>
    </location>
    <ligand>
        <name>Mg(2+)</name>
        <dbReference type="ChEBI" id="CHEBI:18420"/>
        <note>ligand shared between all trimeric partners</note>
    </ligand>
</feature>
<feature type="modified residue" description="Phosphohistidine; by HPr" evidence="1 3">
    <location>
        <position position="78"/>
    </location>
</feature>